<name>SYFA_AZOPC</name>
<dbReference type="EC" id="6.1.1.20" evidence="1"/>
<dbReference type="EMBL" id="AP010656">
    <property type="protein sequence ID" value="BAG83310.1"/>
    <property type="molecule type" value="Genomic_DNA"/>
</dbReference>
<dbReference type="RefSeq" id="WP_012573071.1">
    <property type="nucleotide sequence ID" value="NC_011565.1"/>
</dbReference>
<dbReference type="SMR" id="B6YQ38"/>
<dbReference type="STRING" id="511995.CFPG_047"/>
<dbReference type="KEGG" id="aps:CFPG_047"/>
<dbReference type="eggNOG" id="COG0016">
    <property type="taxonomic scope" value="Bacteria"/>
</dbReference>
<dbReference type="HOGENOM" id="CLU_025086_0_1_10"/>
<dbReference type="OrthoDB" id="9800719at2"/>
<dbReference type="Proteomes" id="UP000000723">
    <property type="component" value="Chromosome"/>
</dbReference>
<dbReference type="GO" id="GO:0005737">
    <property type="term" value="C:cytoplasm"/>
    <property type="evidence" value="ECO:0007669"/>
    <property type="project" value="UniProtKB-SubCell"/>
</dbReference>
<dbReference type="GO" id="GO:0005524">
    <property type="term" value="F:ATP binding"/>
    <property type="evidence" value="ECO:0007669"/>
    <property type="project" value="UniProtKB-UniRule"/>
</dbReference>
<dbReference type="GO" id="GO:0000287">
    <property type="term" value="F:magnesium ion binding"/>
    <property type="evidence" value="ECO:0007669"/>
    <property type="project" value="UniProtKB-UniRule"/>
</dbReference>
<dbReference type="GO" id="GO:0004826">
    <property type="term" value="F:phenylalanine-tRNA ligase activity"/>
    <property type="evidence" value="ECO:0007669"/>
    <property type="project" value="UniProtKB-UniRule"/>
</dbReference>
<dbReference type="GO" id="GO:0000049">
    <property type="term" value="F:tRNA binding"/>
    <property type="evidence" value="ECO:0007669"/>
    <property type="project" value="InterPro"/>
</dbReference>
<dbReference type="GO" id="GO:0006432">
    <property type="term" value="P:phenylalanyl-tRNA aminoacylation"/>
    <property type="evidence" value="ECO:0007669"/>
    <property type="project" value="UniProtKB-UniRule"/>
</dbReference>
<dbReference type="CDD" id="cd00496">
    <property type="entry name" value="PheRS_alpha_core"/>
    <property type="match status" value="1"/>
</dbReference>
<dbReference type="Gene3D" id="3.30.930.10">
    <property type="entry name" value="Bira Bifunctional Protein, Domain 2"/>
    <property type="match status" value="1"/>
</dbReference>
<dbReference type="HAMAP" id="MF_00281">
    <property type="entry name" value="Phe_tRNA_synth_alpha1"/>
    <property type="match status" value="1"/>
</dbReference>
<dbReference type="InterPro" id="IPR006195">
    <property type="entry name" value="aa-tRNA-synth_II"/>
</dbReference>
<dbReference type="InterPro" id="IPR045864">
    <property type="entry name" value="aa-tRNA-synth_II/BPL/LPL"/>
</dbReference>
<dbReference type="InterPro" id="IPR004529">
    <property type="entry name" value="Phe-tRNA-synth_IIc_asu"/>
</dbReference>
<dbReference type="InterPro" id="IPR004188">
    <property type="entry name" value="Phe-tRNA_ligase_II_N"/>
</dbReference>
<dbReference type="InterPro" id="IPR022911">
    <property type="entry name" value="Phe_tRNA_ligase_alpha1_bac"/>
</dbReference>
<dbReference type="InterPro" id="IPR002319">
    <property type="entry name" value="Phenylalanyl-tRNA_Synthase"/>
</dbReference>
<dbReference type="InterPro" id="IPR010978">
    <property type="entry name" value="tRNA-bd_arm"/>
</dbReference>
<dbReference type="NCBIfam" id="TIGR00468">
    <property type="entry name" value="pheS"/>
    <property type="match status" value="1"/>
</dbReference>
<dbReference type="PANTHER" id="PTHR11538:SF41">
    <property type="entry name" value="PHENYLALANINE--TRNA LIGASE, MITOCHONDRIAL"/>
    <property type="match status" value="1"/>
</dbReference>
<dbReference type="PANTHER" id="PTHR11538">
    <property type="entry name" value="PHENYLALANYL-TRNA SYNTHETASE"/>
    <property type="match status" value="1"/>
</dbReference>
<dbReference type="Pfam" id="PF02912">
    <property type="entry name" value="Phe_tRNA-synt_N"/>
    <property type="match status" value="1"/>
</dbReference>
<dbReference type="Pfam" id="PF01409">
    <property type="entry name" value="tRNA-synt_2d"/>
    <property type="match status" value="1"/>
</dbReference>
<dbReference type="SUPFAM" id="SSF55681">
    <property type="entry name" value="Class II aaRS and biotin synthetases"/>
    <property type="match status" value="1"/>
</dbReference>
<dbReference type="SUPFAM" id="SSF46589">
    <property type="entry name" value="tRNA-binding arm"/>
    <property type="match status" value="1"/>
</dbReference>
<dbReference type="PROSITE" id="PS50862">
    <property type="entry name" value="AA_TRNA_LIGASE_II"/>
    <property type="match status" value="1"/>
</dbReference>
<protein>
    <recommendedName>
        <fullName evidence="1">Phenylalanine--tRNA ligase alpha subunit</fullName>
        <ecNumber evidence="1">6.1.1.20</ecNumber>
    </recommendedName>
    <alternativeName>
        <fullName evidence="1">Phenylalanyl-tRNA synthetase alpha subunit</fullName>
        <shortName evidence="1">PheRS</shortName>
    </alternativeName>
</protein>
<gene>
    <name evidence="1" type="primary">pheS</name>
    <name type="ordered locus">CFPG_047</name>
</gene>
<reference key="1">
    <citation type="journal article" date="2008" name="Science">
        <title>Genome of an endosymbiont coupling N2 fixation to cellulolysis within RT protist cells in termite gut.</title>
        <authorList>
            <person name="Hongoh Y."/>
            <person name="Sharma V.K."/>
            <person name="Prakash T."/>
            <person name="Noda S."/>
            <person name="Toh H."/>
            <person name="Taylor T.D."/>
            <person name="Kudo T."/>
            <person name="Sakaki Y."/>
            <person name="Toyoda A."/>
            <person name="Hattori M."/>
            <person name="Ohkuma M."/>
        </authorList>
    </citation>
    <scope>NUCLEOTIDE SEQUENCE [LARGE SCALE GENOMIC DNA]</scope>
</reference>
<sequence>MIGKIETLWDEIDNLNVNNSKELETLRIRFLGKKGEIASLMSGFRNVEANQKREIGQKLNSLKVKIQTKIDQLKETLGCQDLSENLIDLTRTAYPYRVGTRHPISIVQKRICNIFFKLGFSIAEGPEIEDDWHVFSALNFAFDHPARDMQDTFFIKYDKNILLRTHTSSVQIRTMEKTQPPIRILCPGRVYRNEAISARAHCFFHQVEAFYINRNVSFADLRQVLVFFAKEMFDSGINTRLRPSFFPFTEPSAEMDIMCNLCRGKGCSFCKFTGWVEILGCGMIDPNVLDNCNIDSKTYSGYALGMGVERITSLKYQVKDLRLFSENDIRFLRQFEMAV</sequence>
<proteinExistence type="inferred from homology"/>
<organism>
    <name type="scientific">Azobacteroides pseudotrichonymphae genomovar. CFP2</name>
    <dbReference type="NCBI Taxonomy" id="511995"/>
    <lineage>
        <taxon>Bacteria</taxon>
        <taxon>Pseudomonadati</taxon>
        <taxon>Bacteroidota</taxon>
        <taxon>Bacteroidia</taxon>
        <taxon>Bacteroidales</taxon>
        <taxon>Candidatus Azobacteroides</taxon>
    </lineage>
</organism>
<feature type="chain" id="PRO_1000114847" description="Phenylalanine--tRNA ligase alpha subunit">
    <location>
        <begin position="1"/>
        <end position="339"/>
    </location>
</feature>
<feature type="binding site" evidence="1">
    <location>
        <position position="250"/>
    </location>
    <ligand>
        <name>Mg(2+)</name>
        <dbReference type="ChEBI" id="CHEBI:18420"/>
        <note>shared with beta subunit</note>
    </ligand>
</feature>
<keyword id="KW-0030">Aminoacyl-tRNA synthetase</keyword>
<keyword id="KW-0067">ATP-binding</keyword>
<keyword id="KW-0963">Cytoplasm</keyword>
<keyword id="KW-0436">Ligase</keyword>
<keyword id="KW-0460">Magnesium</keyword>
<keyword id="KW-0479">Metal-binding</keyword>
<keyword id="KW-0547">Nucleotide-binding</keyword>
<keyword id="KW-0648">Protein biosynthesis</keyword>
<keyword id="KW-1185">Reference proteome</keyword>
<evidence type="ECO:0000255" key="1">
    <source>
        <dbReference type="HAMAP-Rule" id="MF_00281"/>
    </source>
</evidence>
<comment type="catalytic activity">
    <reaction evidence="1">
        <text>tRNA(Phe) + L-phenylalanine + ATP = L-phenylalanyl-tRNA(Phe) + AMP + diphosphate + H(+)</text>
        <dbReference type="Rhea" id="RHEA:19413"/>
        <dbReference type="Rhea" id="RHEA-COMP:9668"/>
        <dbReference type="Rhea" id="RHEA-COMP:9699"/>
        <dbReference type="ChEBI" id="CHEBI:15378"/>
        <dbReference type="ChEBI" id="CHEBI:30616"/>
        <dbReference type="ChEBI" id="CHEBI:33019"/>
        <dbReference type="ChEBI" id="CHEBI:58095"/>
        <dbReference type="ChEBI" id="CHEBI:78442"/>
        <dbReference type="ChEBI" id="CHEBI:78531"/>
        <dbReference type="ChEBI" id="CHEBI:456215"/>
        <dbReference type="EC" id="6.1.1.20"/>
    </reaction>
</comment>
<comment type="cofactor">
    <cofactor evidence="1">
        <name>Mg(2+)</name>
        <dbReference type="ChEBI" id="CHEBI:18420"/>
    </cofactor>
    <text evidence="1">Binds 2 magnesium ions per tetramer.</text>
</comment>
<comment type="subunit">
    <text evidence="1">Tetramer of two alpha and two beta subunits.</text>
</comment>
<comment type="subcellular location">
    <subcellularLocation>
        <location evidence="1">Cytoplasm</location>
    </subcellularLocation>
</comment>
<comment type="similarity">
    <text evidence="1">Belongs to the class-II aminoacyl-tRNA synthetase family. Phe-tRNA synthetase alpha subunit type 1 subfamily.</text>
</comment>
<accession>B6YQ38</accession>